<sequence length="622" mass="70200">MQTRYMERTNSMREKRKLEEDDNQQQQQQPERKRPALASVIVEALKMDSLQRLCSSLEPILRRVVSEEVERALAKLGPARLSERSSPKRIEGIGGRNLQLQFRSRLSVPLFTGGKIEGEQGAAIHVVLLDMTTGHVLTVGPEASAKLDVVVLDGDFNTEDDDGWSGEEFEGHLVKERQGKRPLLTGDVQVTLKEGVGTLGELIFTDNSSWIRCRKFRLGLRVSSGYCEGMRVREAKTEAFTVKDHRGELYKKHYPPALDDEVWRLEKIGKDGAFHKKLNKAGIYNVKEFLRLMVKDSQKLRTILGSGMSNRMWETLAEHSKTCVLSEMLYVYYPEDSVGVVFNNIYEFSGLISGKQYYPADSLSDNQKGYVDGLVRKAYENWEQVIEYDSKSLMNFNQVSKTDDIDYSMPVSVPSQPSTSYSDVTVEAYNQSPASSFPGQSQLADTTYMHFGNSSFAPQDQLVNNTHESQSMINSNGGVRLALGPATGSQNQEQLVHPPPEINSYNDWSNTCNRGVDGFLSEEEIRARSNEMLENDDMQQLLRLFSMNGGDQQTPLNMGEDSFGFHSFGQTSMADYEEDRSNSGKAVVGWLKIKAAMRWGFFIRRKAAQRRAQIVQLDEDDE</sequence>
<proteinExistence type="evidence at transcript level"/>
<feature type="chain" id="PRO_0000433047" description="Calmodulin-binding protein 60 C">
    <location>
        <begin position="1"/>
        <end position="622"/>
    </location>
</feature>
<feature type="region of interest" description="Disordered" evidence="3">
    <location>
        <begin position="1"/>
        <end position="35"/>
    </location>
</feature>
<feature type="region of interest" description="Calmodulin-binding" evidence="1">
    <location>
        <begin position="10"/>
        <end position="89"/>
    </location>
</feature>
<feature type="region of interest" description="DNA-binding" evidence="1">
    <location>
        <begin position="159"/>
        <end position="282"/>
    </location>
</feature>
<feature type="compositionally biased region" description="Basic and acidic residues" evidence="3">
    <location>
        <begin position="1"/>
        <end position="19"/>
    </location>
</feature>
<feature type="splice variant" id="VSP_057663" description="In isoform 2.">
    <location>
        <begin position="1"/>
        <end position="307"/>
    </location>
</feature>
<comment type="function">
    <text evidence="1">Transcription activator that binds DNA in a sequence-specific manner, likely 5'-GAAATTTTGG-3', to promote the expression of target genes.</text>
</comment>
<comment type="subunit">
    <text evidence="1">Interacts with calmodulin (CaM).</text>
</comment>
<comment type="subcellular location">
    <subcellularLocation>
        <location evidence="2">Nucleus</location>
    </subcellularLocation>
</comment>
<comment type="alternative products">
    <event type="alternative splicing"/>
    <isoform>
        <id>C0SV51-1</id>
        <name>1</name>
        <sequence type="displayed"/>
    </isoform>
    <isoform>
        <id>C0SV51-2</id>
        <name>2</name>
        <sequence type="described" ref="VSP_057663"/>
    </isoform>
</comment>
<comment type="tissue specificity">
    <text evidence="4">Expressed in stems, flowers and root.</text>
</comment>
<comment type="similarity">
    <text evidence="6">Belongs to the plant ACBP60 protein family.</text>
</comment>
<comment type="sequence caution" evidence="6">
    <conflict type="erroneous gene model prediction">
        <sequence resource="EMBL-CDS" id="AAD08944"/>
    </conflict>
</comment>
<protein>
    <recommendedName>
        <fullName evidence="5">Calmodulin-binding protein 60 C</fullName>
    </recommendedName>
</protein>
<keyword id="KW-0010">Activator</keyword>
<keyword id="KW-0025">Alternative splicing</keyword>
<keyword id="KW-0112">Calmodulin-binding</keyword>
<keyword id="KW-0238">DNA-binding</keyword>
<keyword id="KW-0539">Nucleus</keyword>
<keyword id="KW-1185">Reference proteome</keyword>
<keyword id="KW-0804">Transcription</keyword>
<keyword id="KW-0805">Transcription regulation</keyword>
<organism evidence="9">
    <name type="scientific">Arabidopsis thaliana</name>
    <name type="common">Mouse-ear cress</name>
    <dbReference type="NCBI Taxonomy" id="3702"/>
    <lineage>
        <taxon>Eukaryota</taxon>
        <taxon>Viridiplantae</taxon>
        <taxon>Streptophyta</taxon>
        <taxon>Embryophyta</taxon>
        <taxon>Tracheophyta</taxon>
        <taxon>Spermatophyta</taxon>
        <taxon>Magnoliopsida</taxon>
        <taxon>eudicotyledons</taxon>
        <taxon>Gunneridae</taxon>
        <taxon>Pentapetalae</taxon>
        <taxon>rosids</taxon>
        <taxon>malvids</taxon>
        <taxon>Brassicales</taxon>
        <taxon>Brassicaceae</taxon>
        <taxon>Camelineae</taxon>
        <taxon>Arabidopsis</taxon>
    </lineage>
</organism>
<accession>C0SV51</accession>
<accession>Q944Q2</accession>
<accession>Q9ZV44</accession>
<dbReference type="EMBL" id="AC005724">
    <property type="protein sequence ID" value="AAD08944.2"/>
    <property type="status" value="ALT_SEQ"/>
    <property type="molecule type" value="Genomic_DNA"/>
</dbReference>
<dbReference type="EMBL" id="CP002685">
    <property type="protein sequence ID" value="AEC06802.1"/>
    <property type="molecule type" value="Genomic_DNA"/>
</dbReference>
<dbReference type="EMBL" id="CP002685">
    <property type="protein sequence ID" value="AEC06803.1"/>
    <property type="molecule type" value="Genomic_DNA"/>
</dbReference>
<dbReference type="EMBL" id="CP002685">
    <property type="protein sequence ID" value="AEC06804.1"/>
    <property type="molecule type" value="Genomic_DNA"/>
</dbReference>
<dbReference type="EMBL" id="AF424622">
    <property type="protein sequence ID" value="AAL11615.1"/>
    <property type="molecule type" value="mRNA"/>
</dbReference>
<dbReference type="EMBL" id="AY143850">
    <property type="protein sequence ID" value="AAN28789.1"/>
    <property type="molecule type" value="mRNA"/>
</dbReference>
<dbReference type="EMBL" id="AB493554">
    <property type="protein sequence ID" value="BAH30392.1"/>
    <property type="molecule type" value="mRNA"/>
</dbReference>
<dbReference type="PIR" id="B84568">
    <property type="entry name" value="B84568"/>
</dbReference>
<dbReference type="RefSeq" id="NP_001031372.1">
    <molecule id="C0SV51-1"/>
    <property type="nucleotide sequence ID" value="NM_001036295.2"/>
</dbReference>
<dbReference type="RefSeq" id="NP_001189550.1">
    <molecule id="C0SV51-1"/>
    <property type="nucleotide sequence ID" value="NM_001202621.2"/>
</dbReference>
<dbReference type="RefSeq" id="NP_565441.2">
    <molecule id="C0SV51-1"/>
    <property type="nucleotide sequence ID" value="NM_127431.3"/>
</dbReference>
<dbReference type="FunCoup" id="C0SV51">
    <property type="interactions" value="177"/>
</dbReference>
<dbReference type="STRING" id="3702.C0SV51"/>
<dbReference type="iPTMnet" id="C0SV51"/>
<dbReference type="PaxDb" id="3702-AT2G18750.3"/>
<dbReference type="ProteomicsDB" id="222787">
    <molecule id="C0SV51-1"/>
</dbReference>
<dbReference type="EnsemblPlants" id="AT2G18750.1">
    <molecule id="C0SV51-1"/>
    <property type="protein sequence ID" value="AT2G18750.1"/>
    <property type="gene ID" value="AT2G18750"/>
</dbReference>
<dbReference type="EnsemblPlants" id="AT2G18750.2">
    <molecule id="C0SV51-1"/>
    <property type="protein sequence ID" value="AT2G18750.2"/>
    <property type="gene ID" value="AT2G18750"/>
</dbReference>
<dbReference type="EnsemblPlants" id="AT2G18750.3">
    <molecule id="C0SV51-1"/>
    <property type="protein sequence ID" value="AT2G18750.3"/>
    <property type="gene ID" value="AT2G18750"/>
</dbReference>
<dbReference type="GeneID" id="816390"/>
<dbReference type="Gramene" id="AT2G18750.1">
    <molecule id="C0SV51-1"/>
    <property type="protein sequence ID" value="AT2G18750.1"/>
    <property type="gene ID" value="AT2G18750"/>
</dbReference>
<dbReference type="Gramene" id="AT2G18750.2">
    <molecule id="C0SV51-1"/>
    <property type="protein sequence ID" value="AT2G18750.2"/>
    <property type="gene ID" value="AT2G18750"/>
</dbReference>
<dbReference type="Gramene" id="AT2G18750.3">
    <molecule id="C0SV51-1"/>
    <property type="protein sequence ID" value="AT2G18750.3"/>
    <property type="gene ID" value="AT2G18750"/>
</dbReference>
<dbReference type="KEGG" id="ath:AT2G18750"/>
<dbReference type="Araport" id="AT2G18750"/>
<dbReference type="TAIR" id="AT2G18750"/>
<dbReference type="eggNOG" id="ENOG502QQ42">
    <property type="taxonomic scope" value="Eukaryota"/>
</dbReference>
<dbReference type="HOGENOM" id="CLU_031504_3_0_1"/>
<dbReference type="InParanoid" id="C0SV51"/>
<dbReference type="OMA" id="NDWSNTC"/>
<dbReference type="PhylomeDB" id="C0SV51"/>
<dbReference type="PRO" id="PR:C0SV51"/>
<dbReference type="Proteomes" id="UP000006548">
    <property type="component" value="Chromosome 2"/>
</dbReference>
<dbReference type="ExpressionAtlas" id="C0SV51">
    <property type="expression patterns" value="baseline and differential"/>
</dbReference>
<dbReference type="GO" id="GO:0005634">
    <property type="term" value="C:nucleus"/>
    <property type="evidence" value="ECO:0007669"/>
    <property type="project" value="UniProtKB-SubCell"/>
</dbReference>
<dbReference type="GO" id="GO:0005516">
    <property type="term" value="F:calmodulin binding"/>
    <property type="evidence" value="ECO:0007669"/>
    <property type="project" value="UniProtKB-KW"/>
</dbReference>
<dbReference type="GO" id="GO:0003677">
    <property type="term" value="F:DNA binding"/>
    <property type="evidence" value="ECO:0007669"/>
    <property type="project" value="UniProtKB-KW"/>
</dbReference>
<dbReference type="InterPro" id="IPR046829">
    <property type="entry name" value="Calmod_bind_C"/>
</dbReference>
<dbReference type="InterPro" id="IPR046830">
    <property type="entry name" value="Calmod_bind_M"/>
</dbReference>
<dbReference type="InterPro" id="IPR046831">
    <property type="entry name" value="Calmodulin_bind_N"/>
</dbReference>
<dbReference type="InterPro" id="IPR012416">
    <property type="entry name" value="CBP60"/>
</dbReference>
<dbReference type="PANTHER" id="PTHR31713:SF54">
    <property type="entry name" value="CALMODULIN-BINDING PROTEIN 60 C"/>
    <property type="match status" value="1"/>
</dbReference>
<dbReference type="PANTHER" id="PTHR31713">
    <property type="entry name" value="OS02G0177800 PROTEIN"/>
    <property type="match status" value="1"/>
</dbReference>
<dbReference type="Pfam" id="PF20452">
    <property type="entry name" value="Calmod_bind_C"/>
    <property type="match status" value="1"/>
</dbReference>
<dbReference type="Pfam" id="PF20451">
    <property type="entry name" value="Calmod_bind_M"/>
    <property type="match status" value="1"/>
</dbReference>
<dbReference type="Pfam" id="PF07887">
    <property type="entry name" value="Calmodulin_bind"/>
    <property type="match status" value="1"/>
</dbReference>
<gene>
    <name evidence="5" type="primary">CBP60C</name>
    <name evidence="7" type="ordered locus">At2g18750</name>
    <name evidence="8" type="ORF">MSF3.13</name>
</gene>
<reference key="1">
    <citation type="journal article" date="1999" name="Nature">
        <title>Sequence and analysis of chromosome 2 of the plant Arabidopsis thaliana.</title>
        <authorList>
            <person name="Lin X."/>
            <person name="Kaul S."/>
            <person name="Rounsley S.D."/>
            <person name="Shea T.P."/>
            <person name="Benito M.-I."/>
            <person name="Town C.D."/>
            <person name="Fujii C.Y."/>
            <person name="Mason T.M."/>
            <person name="Bowman C.L."/>
            <person name="Barnstead M.E."/>
            <person name="Feldblyum T.V."/>
            <person name="Buell C.R."/>
            <person name="Ketchum K.A."/>
            <person name="Lee J.J."/>
            <person name="Ronning C.M."/>
            <person name="Koo H.L."/>
            <person name="Moffat K.S."/>
            <person name="Cronin L.A."/>
            <person name="Shen M."/>
            <person name="Pai G."/>
            <person name="Van Aken S."/>
            <person name="Umayam L."/>
            <person name="Tallon L.J."/>
            <person name="Gill J.E."/>
            <person name="Adams M.D."/>
            <person name="Carrera A.J."/>
            <person name="Creasy T.H."/>
            <person name="Goodman H.M."/>
            <person name="Somerville C.R."/>
            <person name="Copenhaver G.P."/>
            <person name="Preuss D."/>
            <person name="Nierman W.C."/>
            <person name="White O."/>
            <person name="Eisen J.A."/>
            <person name="Salzberg S.L."/>
            <person name="Fraser C.M."/>
            <person name="Venter J.C."/>
        </authorList>
    </citation>
    <scope>NUCLEOTIDE SEQUENCE [LARGE SCALE GENOMIC DNA]</scope>
    <source>
        <strain>cv. Columbia</strain>
    </source>
</reference>
<reference key="2">
    <citation type="journal article" date="2017" name="Plant J.">
        <title>Araport11: a complete reannotation of the Arabidopsis thaliana reference genome.</title>
        <authorList>
            <person name="Cheng C.Y."/>
            <person name="Krishnakumar V."/>
            <person name="Chan A.P."/>
            <person name="Thibaud-Nissen F."/>
            <person name="Schobel S."/>
            <person name="Town C.D."/>
        </authorList>
    </citation>
    <scope>GENOME REANNOTATION</scope>
    <source>
        <strain>cv. Columbia</strain>
    </source>
</reference>
<reference key="3">
    <citation type="journal article" date="2003" name="Science">
        <title>Empirical analysis of transcriptional activity in the Arabidopsis genome.</title>
        <authorList>
            <person name="Yamada K."/>
            <person name="Lim J."/>
            <person name="Dale J.M."/>
            <person name="Chen H."/>
            <person name="Shinn P."/>
            <person name="Palm C.J."/>
            <person name="Southwick A.M."/>
            <person name="Wu H.C."/>
            <person name="Kim C.J."/>
            <person name="Nguyen M."/>
            <person name="Pham P.K."/>
            <person name="Cheuk R.F."/>
            <person name="Karlin-Newmann G."/>
            <person name="Liu S.X."/>
            <person name="Lam B."/>
            <person name="Sakano H."/>
            <person name="Wu T."/>
            <person name="Yu G."/>
            <person name="Miranda M."/>
            <person name="Quach H.L."/>
            <person name="Tripp M."/>
            <person name="Chang C.H."/>
            <person name="Lee J.M."/>
            <person name="Toriumi M.J."/>
            <person name="Chan M.M."/>
            <person name="Tang C.C."/>
            <person name="Onodera C.S."/>
            <person name="Deng J.M."/>
            <person name="Akiyama K."/>
            <person name="Ansari Y."/>
            <person name="Arakawa T."/>
            <person name="Banh J."/>
            <person name="Banno F."/>
            <person name="Bowser L."/>
            <person name="Brooks S.Y."/>
            <person name="Carninci P."/>
            <person name="Chao Q."/>
            <person name="Choy N."/>
            <person name="Enju A."/>
            <person name="Goldsmith A.D."/>
            <person name="Gurjal M."/>
            <person name="Hansen N.F."/>
            <person name="Hayashizaki Y."/>
            <person name="Johnson-Hopson C."/>
            <person name="Hsuan V.W."/>
            <person name="Iida K."/>
            <person name="Karnes M."/>
            <person name="Khan S."/>
            <person name="Koesema E."/>
            <person name="Ishida J."/>
            <person name="Jiang P.X."/>
            <person name="Jones T."/>
            <person name="Kawai J."/>
            <person name="Kamiya A."/>
            <person name="Meyers C."/>
            <person name="Nakajima M."/>
            <person name="Narusaka M."/>
            <person name="Seki M."/>
            <person name="Sakurai T."/>
            <person name="Satou M."/>
            <person name="Tamse R."/>
            <person name="Vaysberg M."/>
            <person name="Wallender E.K."/>
            <person name="Wong C."/>
            <person name="Yamamura Y."/>
            <person name="Yuan S."/>
            <person name="Shinozaki K."/>
            <person name="Davis R.W."/>
            <person name="Theologis A."/>
            <person name="Ecker J.R."/>
        </authorList>
    </citation>
    <scope>NUCLEOTIDE SEQUENCE [LARGE SCALE MRNA] (ISOFORM 2)</scope>
    <source>
        <strain>cv. Columbia</strain>
    </source>
</reference>
<reference key="4">
    <citation type="submission" date="2009-03" db="EMBL/GenBank/DDBJ databases">
        <title>ORF cloning and analysis of Arabidopsis transcription factor genes.</title>
        <authorList>
            <person name="Fujita M."/>
            <person name="Mizukado S."/>
            <person name="Seki M."/>
            <person name="Shinozaki K."/>
            <person name="Mitsuda N."/>
            <person name="Takiguchi Y."/>
            <person name="Takagi M."/>
        </authorList>
    </citation>
    <scope>NUCLEOTIDE SEQUENCE [LARGE SCALE MRNA] (ISOFORM 1)</scope>
    <source>
        <strain>cv. Columbia</strain>
    </source>
</reference>
<reference key="5">
    <citation type="journal article" date="2002" name="J. Biol. Chem.">
        <title>Genes encoding calmodulin-binding proteins in the Arabidopsis genome.</title>
        <authorList>
            <person name="Reddy V.S."/>
            <person name="Ali G.S."/>
            <person name="Reddy A.S.N."/>
        </authorList>
    </citation>
    <scope>TISSUE SPECIFICITY</scope>
    <scope>GENE FAMILY</scope>
    <scope>NOMENCLATURE</scope>
</reference>
<evidence type="ECO:0000250" key="1">
    <source>
        <dbReference type="UniProtKB" id="F4K2R6"/>
    </source>
</evidence>
<evidence type="ECO:0000250" key="2">
    <source>
        <dbReference type="UniProtKB" id="Q9C9T2"/>
    </source>
</evidence>
<evidence type="ECO:0000256" key="3">
    <source>
        <dbReference type="SAM" id="MobiDB-lite"/>
    </source>
</evidence>
<evidence type="ECO:0000269" key="4">
    <source>
    </source>
</evidence>
<evidence type="ECO:0000303" key="5">
    <source>
    </source>
</evidence>
<evidence type="ECO:0000305" key="6"/>
<evidence type="ECO:0000312" key="7">
    <source>
        <dbReference type="Araport" id="AT2G18750"/>
    </source>
</evidence>
<evidence type="ECO:0000312" key="8">
    <source>
        <dbReference type="EMBL" id="AAD08944.2"/>
    </source>
</evidence>
<evidence type="ECO:0000312" key="9">
    <source>
        <dbReference type="EMBL" id="BAH30392.1"/>
    </source>
</evidence>
<name>CB60C_ARATH</name>